<proteinExistence type="inferred from homology"/>
<feature type="chain" id="PRO_1000011723" description="GTPase Der">
    <location>
        <begin position="1"/>
        <end position="447"/>
    </location>
</feature>
<feature type="domain" description="EngA-type G 1">
    <location>
        <begin position="4"/>
        <end position="165"/>
    </location>
</feature>
<feature type="domain" description="EngA-type G 2">
    <location>
        <begin position="180"/>
        <end position="357"/>
    </location>
</feature>
<feature type="domain" description="KH-like" evidence="1">
    <location>
        <begin position="358"/>
        <end position="443"/>
    </location>
</feature>
<feature type="binding site" evidence="1">
    <location>
        <begin position="10"/>
        <end position="17"/>
    </location>
    <ligand>
        <name>GTP</name>
        <dbReference type="ChEBI" id="CHEBI:37565"/>
        <label>1</label>
    </ligand>
</feature>
<feature type="binding site" evidence="1">
    <location>
        <begin position="57"/>
        <end position="61"/>
    </location>
    <ligand>
        <name>GTP</name>
        <dbReference type="ChEBI" id="CHEBI:37565"/>
        <label>1</label>
    </ligand>
</feature>
<feature type="binding site" evidence="1">
    <location>
        <begin position="119"/>
        <end position="122"/>
    </location>
    <ligand>
        <name>GTP</name>
        <dbReference type="ChEBI" id="CHEBI:37565"/>
        <label>1</label>
    </ligand>
</feature>
<feature type="binding site" evidence="1">
    <location>
        <begin position="186"/>
        <end position="193"/>
    </location>
    <ligand>
        <name>GTP</name>
        <dbReference type="ChEBI" id="CHEBI:37565"/>
        <label>2</label>
    </ligand>
</feature>
<feature type="binding site" evidence="1">
    <location>
        <begin position="233"/>
        <end position="237"/>
    </location>
    <ligand>
        <name>GTP</name>
        <dbReference type="ChEBI" id="CHEBI:37565"/>
        <label>2</label>
    </ligand>
</feature>
<feature type="binding site" evidence="1">
    <location>
        <begin position="298"/>
        <end position="301"/>
    </location>
    <ligand>
        <name>GTP</name>
        <dbReference type="ChEBI" id="CHEBI:37565"/>
        <label>2</label>
    </ligand>
</feature>
<evidence type="ECO:0000255" key="1">
    <source>
        <dbReference type="HAMAP-Rule" id="MF_00195"/>
    </source>
</evidence>
<reference key="1">
    <citation type="submission" date="2007-09" db="EMBL/GenBank/DDBJ databases">
        <title>Complete genome sequence of Rickettsia akari.</title>
        <authorList>
            <person name="Madan A."/>
            <person name="Fahey J."/>
            <person name="Helton E."/>
            <person name="Ketteman M."/>
            <person name="Madan A."/>
            <person name="Rodrigues S."/>
            <person name="Sanchez A."/>
            <person name="Whiting M."/>
            <person name="Dasch G."/>
            <person name="Eremeeva M."/>
        </authorList>
    </citation>
    <scope>NUCLEOTIDE SEQUENCE [LARGE SCALE GENOMIC DNA]</scope>
    <source>
        <strain>Hartford</strain>
    </source>
</reference>
<sequence>MTKKIIALVGRPNVGKSTLFNRLSIRKKAIVHDLPGITRDRKYTDGKIGSFEFLLIDTPGLEENHDSMGARLMEQTTKAILEADLICFMVDGRSGILPNDKLLGSFVRKYNKPAILVVNKCEKAFDFDKEYYKLGFDSMVTISAEHGTGLIDLYDEIITKLPEEESIETNIADPIKGDYLQIVVSGRPNAGKSTFINALINDERLLTGPEAGITRESIEIDWHYKNNHIKLIDTAGLRKKSTITESLEKLSASDAINSIKFANTVILMIDALAPLKQQDLNIASHVVNEGRGIVIVVNKWDLVKESKKEAFQEEFYYQINTHLPQVKGVPVLFISAINKQNIEQVLDSCLKIYKIWNKKIATSKLNEWLNFTTEAHPLPLQKGGRRVRVKYMTQTKTRPPTFKLFSNNPEKITDSYTRYLVNNMRDAFDMPGIPIRFTYVKTKNPYV</sequence>
<name>DER_RICAH</name>
<accession>A8GPH5</accession>
<protein>
    <recommendedName>
        <fullName evidence="1">GTPase Der</fullName>
    </recommendedName>
    <alternativeName>
        <fullName evidence="1">GTP-binding protein EngA</fullName>
    </alternativeName>
</protein>
<keyword id="KW-0342">GTP-binding</keyword>
<keyword id="KW-0547">Nucleotide-binding</keyword>
<keyword id="KW-0677">Repeat</keyword>
<keyword id="KW-0690">Ribosome biogenesis</keyword>
<organism>
    <name type="scientific">Rickettsia akari (strain Hartford)</name>
    <dbReference type="NCBI Taxonomy" id="293614"/>
    <lineage>
        <taxon>Bacteria</taxon>
        <taxon>Pseudomonadati</taxon>
        <taxon>Pseudomonadota</taxon>
        <taxon>Alphaproteobacteria</taxon>
        <taxon>Rickettsiales</taxon>
        <taxon>Rickettsiaceae</taxon>
        <taxon>Rickettsieae</taxon>
        <taxon>Rickettsia</taxon>
        <taxon>spotted fever group</taxon>
    </lineage>
</organism>
<gene>
    <name evidence="1" type="primary">der</name>
    <name type="synonym">engA</name>
    <name type="ordered locus">A1C_05240</name>
</gene>
<dbReference type="EMBL" id="CP000847">
    <property type="protein sequence ID" value="ABV75300.1"/>
    <property type="molecule type" value="Genomic_DNA"/>
</dbReference>
<dbReference type="RefSeq" id="WP_012149930.1">
    <property type="nucleotide sequence ID" value="NC_009881.1"/>
</dbReference>
<dbReference type="SMR" id="A8GPH5"/>
<dbReference type="STRING" id="293614.A1C_05240"/>
<dbReference type="KEGG" id="rak:A1C_05240"/>
<dbReference type="eggNOG" id="COG1160">
    <property type="taxonomic scope" value="Bacteria"/>
</dbReference>
<dbReference type="HOGENOM" id="CLU_016077_5_0_5"/>
<dbReference type="Proteomes" id="UP000006830">
    <property type="component" value="Chromosome"/>
</dbReference>
<dbReference type="GO" id="GO:0005525">
    <property type="term" value="F:GTP binding"/>
    <property type="evidence" value="ECO:0007669"/>
    <property type="project" value="UniProtKB-UniRule"/>
</dbReference>
<dbReference type="GO" id="GO:0042254">
    <property type="term" value="P:ribosome biogenesis"/>
    <property type="evidence" value="ECO:0007669"/>
    <property type="project" value="UniProtKB-KW"/>
</dbReference>
<dbReference type="CDD" id="cd01894">
    <property type="entry name" value="EngA1"/>
    <property type="match status" value="1"/>
</dbReference>
<dbReference type="CDD" id="cd01895">
    <property type="entry name" value="EngA2"/>
    <property type="match status" value="1"/>
</dbReference>
<dbReference type="FunFam" id="3.30.300.20:FF:000004">
    <property type="entry name" value="GTPase Der"/>
    <property type="match status" value="1"/>
</dbReference>
<dbReference type="Gene3D" id="3.30.300.20">
    <property type="match status" value="1"/>
</dbReference>
<dbReference type="Gene3D" id="3.40.50.300">
    <property type="entry name" value="P-loop containing nucleotide triphosphate hydrolases"/>
    <property type="match status" value="2"/>
</dbReference>
<dbReference type="HAMAP" id="MF_00195">
    <property type="entry name" value="GTPase_Der"/>
    <property type="match status" value="1"/>
</dbReference>
<dbReference type="InterPro" id="IPR031166">
    <property type="entry name" value="G_ENGA"/>
</dbReference>
<dbReference type="InterPro" id="IPR006073">
    <property type="entry name" value="GTP-bd"/>
</dbReference>
<dbReference type="InterPro" id="IPR016484">
    <property type="entry name" value="GTPase_Der"/>
</dbReference>
<dbReference type="InterPro" id="IPR032859">
    <property type="entry name" value="KH_dom-like"/>
</dbReference>
<dbReference type="InterPro" id="IPR015946">
    <property type="entry name" value="KH_dom-like_a/b"/>
</dbReference>
<dbReference type="InterPro" id="IPR027417">
    <property type="entry name" value="P-loop_NTPase"/>
</dbReference>
<dbReference type="InterPro" id="IPR005225">
    <property type="entry name" value="Small_GTP-bd"/>
</dbReference>
<dbReference type="NCBIfam" id="TIGR03594">
    <property type="entry name" value="GTPase_EngA"/>
    <property type="match status" value="1"/>
</dbReference>
<dbReference type="NCBIfam" id="TIGR00231">
    <property type="entry name" value="small_GTP"/>
    <property type="match status" value="2"/>
</dbReference>
<dbReference type="PANTHER" id="PTHR43834">
    <property type="entry name" value="GTPASE DER"/>
    <property type="match status" value="1"/>
</dbReference>
<dbReference type="PANTHER" id="PTHR43834:SF6">
    <property type="entry name" value="GTPASE DER"/>
    <property type="match status" value="1"/>
</dbReference>
<dbReference type="Pfam" id="PF14714">
    <property type="entry name" value="KH_dom-like"/>
    <property type="match status" value="1"/>
</dbReference>
<dbReference type="Pfam" id="PF01926">
    <property type="entry name" value="MMR_HSR1"/>
    <property type="match status" value="2"/>
</dbReference>
<dbReference type="PIRSF" id="PIRSF006485">
    <property type="entry name" value="GTP-binding_EngA"/>
    <property type="match status" value="1"/>
</dbReference>
<dbReference type="PRINTS" id="PR00326">
    <property type="entry name" value="GTP1OBG"/>
</dbReference>
<dbReference type="SUPFAM" id="SSF52540">
    <property type="entry name" value="P-loop containing nucleoside triphosphate hydrolases"/>
    <property type="match status" value="2"/>
</dbReference>
<dbReference type="PROSITE" id="PS51712">
    <property type="entry name" value="G_ENGA"/>
    <property type="match status" value="2"/>
</dbReference>
<comment type="function">
    <text evidence="1">GTPase that plays an essential role in the late steps of ribosome biogenesis.</text>
</comment>
<comment type="subunit">
    <text evidence="1">Associates with the 50S ribosomal subunit.</text>
</comment>
<comment type="similarity">
    <text evidence="1">Belongs to the TRAFAC class TrmE-Era-EngA-EngB-Septin-like GTPase superfamily. EngA (Der) GTPase family.</text>
</comment>